<organism>
    <name type="scientific">Yersinia pseudotuberculosis serotype I (strain IP32953)</name>
    <dbReference type="NCBI Taxonomy" id="273123"/>
    <lineage>
        <taxon>Bacteria</taxon>
        <taxon>Pseudomonadati</taxon>
        <taxon>Pseudomonadota</taxon>
        <taxon>Gammaproteobacteria</taxon>
        <taxon>Enterobacterales</taxon>
        <taxon>Yersiniaceae</taxon>
        <taxon>Yersinia</taxon>
    </lineage>
</organism>
<comment type="function">
    <text evidence="1">Catalyzes the reversible isomerization-deamination of glucosamine 6-phosphate (GlcN6P) to form fructose 6-phosphate (Fru6P) and ammonium ion.</text>
</comment>
<comment type="catalytic activity">
    <reaction evidence="1">
        <text>alpha-D-glucosamine 6-phosphate + H2O = beta-D-fructose 6-phosphate + NH4(+)</text>
        <dbReference type="Rhea" id="RHEA:12172"/>
        <dbReference type="ChEBI" id="CHEBI:15377"/>
        <dbReference type="ChEBI" id="CHEBI:28938"/>
        <dbReference type="ChEBI" id="CHEBI:57634"/>
        <dbReference type="ChEBI" id="CHEBI:75989"/>
        <dbReference type="EC" id="3.5.99.6"/>
    </reaction>
</comment>
<comment type="activity regulation">
    <text evidence="1">Allosterically activated by N-acetylglucosamine 6-phosphate (GlcNAc6P).</text>
</comment>
<comment type="pathway">
    <text evidence="1">Amino-sugar metabolism; N-acetylneuraminate degradation; D-fructose 6-phosphate from N-acetylneuraminate: step 5/5.</text>
</comment>
<comment type="subunit">
    <text evidence="1">Homohexamer.</text>
</comment>
<comment type="similarity">
    <text evidence="1">Belongs to the glucosamine/galactosamine-6-phosphate isomerase family. NagB subfamily.</text>
</comment>
<sequence length="266" mass="29667">MRLIPLRNTAEVGKWAARHIVNRINAFKPTAERPFILGLPTGGTPMEAYKYLIAMHKAGEVSFKHVVTFNMDEYVGLPKEHPESYYTFMHTNFFDHVDIPAENINLLNGNAADIDAECRRYEEKIKSYGKIHLFMGGVGVDGHIAFNEPASSLASRTRIKTLTQETRIANSRFFGGDANLVPKYALTVGVGTLLDAEEVMILVTGHGKAQALQAAVEGSINHMWTISCLQLHAKAIMVCDEPSTMELKVKTVKYFRELEAENVKDL</sequence>
<dbReference type="EC" id="3.5.99.6" evidence="1"/>
<dbReference type="EMBL" id="BX936398">
    <property type="protein sequence ID" value="CAH20359.1"/>
    <property type="molecule type" value="Genomic_DNA"/>
</dbReference>
<dbReference type="RefSeq" id="WP_002210352.1">
    <property type="nucleotide sequence ID" value="NZ_CP009712.1"/>
</dbReference>
<dbReference type="SMR" id="Q66DC7"/>
<dbReference type="GeneID" id="57976064"/>
<dbReference type="KEGG" id="ypo:BZ17_1418"/>
<dbReference type="KEGG" id="yps:YPTB1119"/>
<dbReference type="PATRIC" id="fig|273123.14.peg.1506"/>
<dbReference type="UniPathway" id="UPA00629">
    <property type="reaction ID" value="UER00684"/>
</dbReference>
<dbReference type="Proteomes" id="UP000001011">
    <property type="component" value="Chromosome"/>
</dbReference>
<dbReference type="GO" id="GO:0005737">
    <property type="term" value="C:cytoplasm"/>
    <property type="evidence" value="ECO:0007669"/>
    <property type="project" value="TreeGrafter"/>
</dbReference>
<dbReference type="GO" id="GO:0004342">
    <property type="term" value="F:glucosamine-6-phosphate deaminase activity"/>
    <property type="evidence" value="ECO:0007669"/>
    <property type="project" value="UniProtKB-UniRule"/>
</dbReference>
<dbReference type="GO" id="GO:0042802">
    <property type="term" value="F:identical protein binding"/>
    <property type="evidence" value="ECO:0007669"/>
    <property type="project" value="TreeGrafter"/>
</dbReference>
<dbReference type="GO" id="GO:0005975">
    <property type="term" value="P:carbohydrate metabolic process"/>
    <property type="evidence" value="ECO:0007669"/>
    <property type="project" value="InterPro"/>
</dbReference>
<dbReference type="GO" id="GO:0006043">
    <property type="term" value="P:glucosamine catabolic process"/>
    <property type="evidence" value="ECO:0007669"/>
    <property type="project" value="TreeGrafter"/>
</dbReference>
<dbReference type="GO" id="GO:0006046">
    <property type="term" value="P:N-acetylglucosamine catabolic process"/>
    <property type="evidence" value="ECO:0007669"/>
    <property type="project" value="TreeGrafter"/>
</dbReference>
<dbReference type="GO" id="GO:0019262">
    <property type="term" value="P:N-acetylneuraminate catabolic process"/>
    <property type="evidence" value="ECO:0007669"/>
    <property type="project" value="UniProtKB-UniRule"/>
</dbReference>
<dbReference type="CDD" id="cd01399">
    <property type="entry name" value="GlcN6P_deaminase"/>
    <property type="match status" value="1"/>
</dbReference>
<dbReference type="FunFam" id="3.40.50.1360:FF:000002">
    <property type="entry name" value="Glucosamine-6-phosphate deaminase"/>
    <property type="match status" value="1"/>
</dbReference>
<dbReference type="Gene3D" id="3.40.50.1360">
    <property type="match status" value="1"/>
</dbReference>
<dbReference type="HAMAP" id="MF_01241">
    <property type="entry name" value="GlcN6P_deamin"/>
    <property type="match status" value="1"/>
</dbReference>
<dbReference type="InterPro" id="IPR006148">
    <property type="entry name" value="Glc/Gal-6P_isomerase"/>
</dbReference>
<dbReference type="InterPro" id="IPR004547">
    <property type="entry name" value="Glucosamine6P_isomerase"/>
</dbReference>
<dbReference type="InterPro" id="IPR018321">
    <property type="entry name" value="Glucosamine6P_isomerase_CS"/>
</dbReference>
<dbReference type="InterPro" id="IPR037171">
    <property type="entry name" value="NagB/RpiA_transferase-like"/>
</dbReference>
<dbReference type="NCBIfam" id="TIGR00502">
    <property type="entry name" value="nagB"/>
    <property type="match status" value="1"/>
</dbReference>
<dbReference type="NCBIfam" id="NF001685">
    <property type="entry name" value="PRK00443.1-5"/>
    <property type="match status" value="1"/>
</dbReference>
<dbReference type="PANTHER" id="PTHR11280">
    <property type="entry name" value="GLUCOSAMINE-6-PHOSPHATE ISOMERASE"/>
    <property type="match status" value="1"/>
</dbReference>
<dbReference type="PANTHER" id="PTHR11280:SF5">
    <property type="entry name" value="GLUCOSAMINE-6-PHOSPHATE ISOMERASE"/>
    <property type="match status" value="1"/>
</dbReference>
<dbReference type="Pfam" id="PF01182">
    <property type="entry name" value="Glucosamine_iso"/>
    <property type="match status" value="1"/>
</dbReference>
<dbReference type="SUPFAM" id="SSF100950">
    <property type="entry name" value="NagB/RpiA/CoA transferase-like"/>
    <property type="match status" value="1"/>
</dbReference>
<dbReference type="PROSITE" id="PS01161">
    <property type="entry name" value="GLC_GALNAC_ISOMERASE"/>
    <property type="match status" value="1"/>
</dbReference>
<protein>
    <recommendedName>
        <fullName evidence="1">Glucosamine-6-phosphate deaminase</fullName>
        <ecNumber evidence="1">3.5.99.6</ecNumber>
    </recommendedName>
    <alternativeName>
        <fullName evidence="1">GlcN6P deaminase</fullName>
        <shortName evidence="1">GNPDA</shortName>
    </alternativeName>
    <alternativeName>
        <fullName evidence="1">Glucosamine-6-phosphate isomerase</fullName>
    </alternativeName>
</protein>
<proteinExistence type="inferred from homology"/>
<feature type="chain" id="PRO_1000067041" description="Glucosamine-6-phosphate deaminase">
    <location>
        <begin position="1"/>
        <end position="266"/>
    </location>
</feature>
<feature type="active site" description="Proton acceptor; for enolization step" evidence="1">
    <location>
        <position position="72"/>
    </location>
</feature>
<feature type="active site" description="For ring-opening step" evidence="1">
    <location>
        <position position="141"/>
    </location>
</feature>
<feature type="active site" description="Proton acceptor; for ring-opening step" evidence="1">
    <location>
        <position position="143"/>
    </location>
</feature>
<feature type="active site" description="For ring-opening step" evidence="1">
    <location>
        <position position="148"/>
    </location>
</feature>
<feature type="site" description="Part of the allosteric site" evidence="1">
    <location>
        <position position="151"/>
    </location>
</feature>
<feature type="site" description="Part of the allosteric site" evidence="1">
    <location>
        <position position="158"/>
    </location>
</feature>
<feature type="site" description="Part of the allosteric site" evidence="1">
    <location>
        <position position="160"/>
    </location>
</feature>
<feature type="site" description="Part of the allosteric site" evidence="1">
    <location>
        <position position="161"/>
    </location>
</feature>
<feature type="site" description="Part of the allosteric site" evidence="1">
    <location>
        <position position="254"/>
    </location>
</feature>
<gene>
    <name evidence="1" type="primary">nagB</name>
    <name type="ordered locus">YPTB1119</name>
</gene>
<keyword id="KW-0021">Allosteric enzyme</keyword>
<keyword id="KW-0119">Carbohydrate metabolism</keyword>
<keyword id="KW-0378">Hydrolase</keyword>
<reference key="1">
    <citation type="journal article" date="2004" name="Proc. Natl. Acad. Sci. U.S.A.">
        <title>Insights into the evolution of Yersinia pestis through whole-genome comparison with Yersinia pseudotuberculosis.</title>
        <authorList>
            <person name="Chain P.S.G."/>
            <person name="Carniel E."/>
            <person name="Larimer F.W."/>
            <person name="Lamerdin J."/>
            <person name="Stoutland P.O."/>
            <person name="Regala W.M."/>
            <person name="Georgescu A.M."/>
            <person name="Vergez L.M."/>
            <person name="Land M.L."/>
            <person name="Motin V.L."/>
            <person name="Brubaker R.R."/>
            <person name="Fowler J."/>
            <person name="Hinnebusch J."/>
            <person name="Marceau M."/>
            <person name="Medigue C."/>
            <person name="Simonet M."/>
            <person name="Chenal-Francisque V."/>
            <person name="Souza B."/>
            <person name="Dacheux D."/>
            <person name="Elliott J.M."/>
            <person name="Derbise A."/>
            <person name="Hauser L.J."/>
            <person name="Garcia E."/>
        </authorList>
    </citation>
    <scope>NUCLEOTIDE SEQUENCE [LARGE SCALE GENOMIC DNA]</scope>
    <source>
        <strain>IP32953</strain>
    </source>
</reference>
<evidence type="ECO:0000255" key="1">
    <source>
        <dbReference type="HAMAP-Rule" id="MF_01241"/>
    </source>
</evidence>
<name>NAGB_YERPS</name>
<accession>Q66DC7</accession>